<name>RL2_SULDN</name>
<keyword id="KW-1185">Reference proteome</keyword>
<keyword id="KW-0687">Ribonucleoprotein</keyword>
<keyword id="KW-0689">Ribosomal protein</keyword>
<keyword id="KW-0694">RNA-binding</keyword>
<keyword id="KW-0699">rRNA-binding</keyword>
<sequence>MAIKSYKPTTPSRRFYTNVENNDITSKPSVRSLLVKLPASAGRNNNGRITSRHREAGAKKLYRIIDFKRDKFGIAGTVSTVEYDPYRNCRIALITYVDGEKRYILLPKGLNVGDAIIADATGVDIKPGNAMKLMNIPVGTSVHNIELKVGKGGQMVRSAGTSAQIMGRDGKYVSLRMPSSEMRLVLGECMATVGAVGNEEYINIVLGKAGRTRHMGIRPQTRGSAMNPIDHPHGGGEGKTNSGRHPVTPWGKPTKGSKTRRKKASDKLIITRRKSNPKR</sequence>
<evidence type="ECO:0000255" key="1">
    <source>
        <dbReference type="HAMAP-Rule" id="MF_01320"/>
    </source>
</evidence>
<evidence type="ECO:0000256" key="2">
    <source>
        <dbReference type="SAM" id="MobiDB-lite"/>
    </source>
</evidence>
<evidence type="ECO:0000305" key="3"/>
<feature type="chain" id="PRO_0000237262" description="Large ribosomal subunit protein uL2">
    <location>
        <begin position="1"/>
        <end position="279"/>
    </location>
</feature>
<feature type="region of interest" description="Disordered" evidence="2">
    <location>
        <begin position="218"/>
        <end position="279"/>
    </location>
</feature>
<feature type="compositionally biased region" description="Basic residues" evidence="2">
    <location>
        <begin position="255"/>
        <end position="279"/>
    </location>
</feature>
<organism>
    <name type="scientific">Sulfurimonas denitrificans (strain ATCC 33889 / DSM 1251)</name>
    <name type="common">Thiomicrospira denitrificans (strain ATCC 33889 / DSM 1251)</name>
    <dbReference type="NCBI Taxonomy" id="326298"/>
    <lineage>
        <taxon>Bacteria</taxon>
        <taxon>Pseudomonadati</taxon>
        <taxon>Campylobacterota</taxon>
        <taxon>Epsilonproteobacteria</taxon>
        <taxon>Campylobacterales</taxon>
        <taxon>Sulfurimonadaceae</taxon>
        <taxon>Sulfurimonas</taxon>
    </lineage>
</organism>
<gene>
    <name evidence="1" type="primary">rplB</name>
    <name type="ordered locus">Suden_0289</name>
</gene>
<protein>
    <recommendedName>
        <fullName evidence="1">Large ribosomal subunit protein uL2</fullName>
    </recommendedName>
    <alternativeName>
        <fullName evidence="3">50S ribosomal protein L2</fullName>
    </alternativeName>
</protein>
<dbReference type="EMBL" id="CP000153">
    <property type="protein sequence ID" value="ABB43570.1"/>
    <property type="molecule type" value="Genomic_DNA"/>
</dbReference>
<dbReference type="RefSeq" id="WP_011371925.1">
    <property type="nucleotide sequence ID" value="NC_007575.1"/>
</dbReference>
<dbReference type="SMR" id="Q30TW1"/>
<dbReference type="STRING" id="326298.Suden_0289"/>
<dbReference type="KEGG" id="tdn:Suden_0289"/>
<dbReference type="eggNOG" id="COG0090">
    <property type="taxonomic scope" value="Bacteria"/>
</dbReference>
<dbReference type="HOGENOM" id="CLU_036235_2_1_7"/>
<dbReference type="OrthoDB" id="9778722at2"/>
<dbReference type="Proteomes" id="UP000002714">
    <property type="component" value="Chromosome"/>
</dbReference>
<dbReference type="GO" id="GO:0015934">
    <property type="term" value="C:large ribosomal subunit"/>
    <property type="evidence" value="ECO:0007669"/>
    <property type="project" value="InterPro"/>
</dbReference>
<dbReference type="GO" id="GO:0019843">
    <property type="term" value="F:rRNA binding"/>
    <property type="evidence" value="ECO:0007669"/>
    <property type="project" value="UniProtKB-UniRule"/>
</dbReference>
<dbReference type="GO" id="GO:0003735">
    <property type="term" value="F:structural constituent of ribosome"/>
    <property type="evidence" value="ECO:0007669"/>
    <property type="project" value="InterPro"/>
</dbReference>
<dbReference type="GO" id="GO:0016740">
    <property type="term" value="F:transferase activity"/>
    <property type="evidence" value="ECO:0007669"/>
    <property type="project" value="InterPro"/>
</dbReference>
<dbReference type="GO" id="GO:0002181">
    <property type="term" value="P:cytoplasmic translation"/>
    <property type="evidence" value="ECO:0007669"/>
    <property type="project" value="TreeGrafter"/>
</dbReference>
<dbReference type="FunFam" id="2.30.30.30:FF:000001">
    <property type="entry name" value="50S ribosomal protein L2"/>
    <property type="match status" value="1"/>
</dbReference>
<dbReference type="FunFam" id="2.40.50.140:FF:000003">
    <property type="entry name" value="50S ribosomal protein L2"/>
    <property type="match status" value="1"/>
</dbReference>
<dbReference type="FunFam" id="4.10.950.10:FF:000001">
    <property type="entry name" value="50S ribosomal protein L2"/>
    <property type="match status" value="1"/>
</dbReference>
<dbReference type="Gene3D" id="2.30.30.30">
    <property type="match status" value="1"/>
</dbReference>
<dbReference type="Gene3D" id="2.40.50.140">
    <property type="entry name" value="Nucleic acid-binding proteins"/>
    <property type="match status" value="1"/>
</dbReference>
<dbReference type="Gene3D" id="4.10.950.10">
    <property type="entry name" value="Ribosomal protein L2, domain 3"/>
    <property type="match status" value="1"/>
</dbReference>
<dbReference type="HAMAP" id="MF_01320_B">
    <property type="entry name" value="Ribosomal_uL2_B"/>
    <property type="match status" value="1"/>
</dbReference>
<dbReference type="InterPro" id="IPR012340">
    <property type="entry name" value="NA-bd_OB-fold"/>
</dbReference>
<dbReference type="InterPro" id="IPR014722">
    <property type="entry name" value="Rib_uL2_dom2"/>
</dbReference>
<dbReference type="InterPro" id="IPR002171">
    <property type="entry name" value="Ribosomal_uL2"/>
</dbReference>
<dbReference type="InterPro" id="IPR005880">
    <property type="entry name" value="Ribosomal_uL2_bac/org-type"/>
</dbReference>
<dbReference type="InterPro" id="IPR022669">
    <property type="entry name" value="Ribosomal_uL2_C"/>
</dbReference>
<dbReference type="InterPro" id="IPR022671">
    <property type="entry name" value="Ribosomal_uL2_CS"/>
</dbReference>
<dbReference type="InterPro" id="IPR014726">
    <property type="entry name" value="Ribosomal_uL2_dom3"/>
</dbReference>
<dbReference type="InterPro" id="IPR022666">
    <property type="entry name" value="Ribosomal_uL2_RNA-bd_dom"/>
</dbReference>
<dbReference type="InterPro" id="IPR008991">
    <property type="entry name" value="Translation_prot_SH3-like_sf"/>
</dbReference>
<dbReference type="NCBIfam" id="TIGR01171">
    <property type="entry name" value="rplB_bact"/>
    <property type="match status" value="1"/>
</dbReference>
<dbReference type="PANTHER" id="PTHR13691:SF5">
    <property type="entry name" value="LARGE RIBOSOMAL SUBUNIT PROTEIN UL2M"/>
    <property type="match status" value="1"/>
</dbReference>
<dbReference type="PANTHER" id="PTHR13691">
    <property type="entry name" value="RIBOSOMAL PROTEIN L2"/>
    <property type="match status" value="1"/>
</dbReference>
<dbReference type="Pfam" id="PF00181">
    <property type="entry name" value="Ribosomal_L2"/>
    <property type="match status" value="1"/>
</dbReference>
<dbReference type="Pfam" id="PF03947">
    <property type="entry name" value="Ribosomal_L2_C"/>
    <property type="match status" value="1"/>
</dbReference>
<dbReference type="PIRSF" id="PIRSF002158">
    <property type="entry name" value="Ribosomal_L2"/>
    <property type="match status" value="1"/>
</dbReference>
<dbReference type="SMART" id="SM01383">
    <property type="entry name" value="Ribosomal_L2"/>
    <property type="match status" value="1"/>
</dbReference>
<dbReference type="SMART" id="SM01382">
    <property type="entry name" value="Ribosomal_L2_C"/>
    <property type="match status" value="1"/>
</dbReference>
<dbReference type="SUPFAM" id="SSF50249">
    <property type="entry name" value="Nucleic acid-binding proteins"/>
    <property type="match status" value="1"/>
</dbReference>
<dbReference type="SUPFAM" id="SSF50104">
    <property type="entry name" value="Translation proteins SH3-like domain"/>
    <property type="match status" value="1"/>
</dbReference>
<dbReference type="PROSITE" id="PS00467">
    <property type="entry name" value="RIBOSOMAL_L2"/>
    <property type="match status" value="1"/>
</dbReference>
<proteinExistence type="inferred from homology"/>
<comment type="function">
    <text evidence="1">One of the primary rRNA binding proteins. Required for association of the 30S and 50S subunits to form the 70S ribosome, for tRNA binding and peptide bond formation. It has been suggested to have peptidyltransferase activity; this is somewhat controversial. Makes several contacts with the 16S rRNA in the 70S ribosome.</text>
</comment>
<comment type="subunit">
    <text evidence="1">Part of the 50S ribosomal subunit. Forms a bridge to the 30S subunit in the 70S ribosome.</text>
</comment>
<comment type="similarity">
    <text evidence="1">Belongs to the universal ribosomal protein uL2 family.</text>
</comment>
<reference key="1">
    <citation type="journal article" date="2008" name="Appl. Environ. Microbiol.">
        <title>Genome of the epsilonproteobacterial chemolithoautotroph Sulfurimonas denitrificans.</title>
        <authorList>
            <person name="Sievert S.M."/>
            <person name="Scott K.M."/>
            <person name="Klotz M.G."/>
            <person name="Chain P.S.G."/>
            <person name="Hauser L.J."/>
            <person name="Hemp J."/>
            <person name="Huegler M."/>
            <person name="Land M."/>
            <person name="Lapidus A."/>
            <person name="Larimer F.W."/>
            <person name="Lucas S."/>
            <person name="Malfatti S.A."/>
            <person name="Meyer F."/>
            <person name="Paulsen I.T."/>
            <person name="Ren Q."/>
            <person name="Simon J."/>
            <person name="Bailey K."/>
            <person name="Diaz E."/>
            <person name="Fitzpatrick K.A."/>
            <person name="Glover B."/>
            <person name="Gwatney N."/>
            <person name="Korajkic A."/>
            <person name="Long A."/>
            <person name="Mobberley J.M."/>
            <person name="Pantry S.N."/>
            <person name="Pazder G."/>
            <person name="Peterson S."/>
            <person name="Quintanilla J.D."/>
            <person name="Sprinkle R."/>
            <person name="Stephens J."/>
            <person name="Thomas P."/>
            <person name="Vaughn R."/>
            <person name="Weber M.J."/>
            <person name="Wooten L.L."/>
        </authorList>
    </citation>
    <scope>NUCLEOTIDE SEQUENCE [LARGE SCALE GENOMIC DNA]</scope>
    <source>
        <strain>ATCC 33889 / DSM 1251</strain>
    </source>
</reference>
<accession>Q30TW1</accession>